<protein>
    <recommendedName>
        <fullName evidence="1">Potassium-transporting ATPase ATP-binding subunit</fullName>
        <ecNumber evidence="1">7.2.2.6</ecNumber>
    </recommendedName>
    <alternativeName>
        <fullName evidence="1">ATP phosphohydrolase [potassium-transporting] B chain</fullName>
    </alternativeName>
    <alternativeName>
        <fullName evidence="1">Potassium-binding and translocating subunit B</fullName>
    </alternativeName>
    <alternativeName>
        <fullName evidence="1">Potassium-translocating ATPase B chain</fullName>
    </alternativeName>
</protein>
<proteinExistence type="inferred from homology"/>
<comment type="function">
    <text evidence="1">Part of the high-affinity ATP-driven potassium transport (or Kdp) system, which catalyzes the hydrolysis of ATP coupled with the electrogenic transport of potassium into the cytoplasm. This subunit is responsible for energy coupling to the transport system and for the release of the potassium ions to the cytoplasm.</text>
</comment>
<comment type="catalytic activity">
    <reaction evidence="1">
        <text>K(+)(out) + ATP + H2O = K(+)(in) + ADP + phosphate + H(+)</text>
        <dbReference type="Rhea" id="RHEA:16777"/>
        <dbReference type="ChEBI" id="CHEBI:15377"/>
        <dbReference type="ChEBI" id="CHEBI:15378"/>
        <dbReference type="ChEBI" id="CHEBI:29103"/>
        <dbReference type="ChEBI" id="CHEBI:30616"/>
        <dbReference type="ChEBI" id="CHEBI:43474"/>
        <dbReference type="ChEBI" id="CHEBI:456216"/>
        <dbReference type="EC" id="7.2.2.6"/>
    </reaction>
    <physiologicalReaction direction="left-to-right" evidence="1">
        <dbReference type="Rhea" id="RHEA:16778"/>
    </physiologicalReaction>
</comment>
<comment type="subunit">
    <text evidence="1">The system is composed of three essential subunits: KdpA, KdpB and KdpC.</text>
</comment>
<comment type="subcellular location">
    <subcellularLocation>
        <location evidence="1">Cell membrane</location>
        <topology evidence="1">Multi-pass membrane protein</topology>
    </subcellularLocation>
</comment>
<comment type="similarity">
    <text evidence="1">Belongs to the cation transport ATPase (P-type) (TC 3.A.3) family. Type IA subfamily.</text>
</comment>
<accession>B7HWG1</accession>
<gene>
    <name evidence="1" type="primary">kdpB</name>
    <name type="ordered locus">BCAH187_A0895</name>
</gene>
<name>KDPB_BACC7</name>
<keyword id="KW-0067">ATP-binding</keyword>
<keyword id="KW-1003">Cell membrane</keyword>
<keyword id="KW-0406">Ion transport</keyword>
<keyword id="KW-0460">Magnesium</keyword>
<keyword id="KW-0472">Membrane</keyword>
<keyword id="KW-0479">Metal-binding</keyword>
<keyword id="KW-0547">Nucleotide-binding</keyword>
<keyword id="KW-0597">Phosphoprotein</keyword>
<keyword id="KW-0630">Potassium</keyword>
<keyword id="KW-0633">Potassium transport</keyword>
<keyword id="KW-1278">Translocase</keyword>
<keyword id="KW-0812">Transmembrane</keyword>
<keyword id="KW-1133">Transmembrane helix</keyword>
<keyword id="KW-0813">Transport</keyword>
<feature type="chain" id="PRO_1000119407" description="Potassium-transporting ATPase ATP-binding subunit">
    <location>
        <begin position="1"/>
        <end position="697"/>
    </location>
</feature>
<feature type="transmembrane region" description="Helical" evidence="1">
    <location>
        <begin position="55"/>
        <end position="75"/>
    </location>
</feature>
<feature type="transmembrane region" description="Helical" evidence="1">
    <location>
        <begin position="82"/>
        <end position="102"/>
    </location>
</feature>
<feature type="transmembrane region" description="Helical" evidence="1">
    <location>
        <begin position="245"/>
        <end position="265"/>
    </location>
</feature>
<feature type="transmembrane region" description="Helical" evidence="1">
    <location>
        <begin position="271"/>
        <end position="291"/>
    </location>
</feature>
<feature type="transmembrane region" description="Helical" evidence="1">
    <location>
        <begin position="605"/>
        <end position="625"/>
    </location>
</feature>
<feature type="transmembrane region" description="Helical" evidence="1">
    <location>
        <begin position="633"/>
        <end position="653"/>
    </location>
</feature>
<feature type="transmembrane region" description="Helical" evidence="1">
    <location>
        <begin position="677"/>
        <end position="697"/>
    </location>
</feature>
<feature type="active site" description="4-aspartylphosphate intermediate" evidence="1">
    <location>
        <position position="324"/>
    </location>
</feature>
<feature type="binding site" evidence="1">
    <location>
        <position position="361"/>
    </location>
    <ligand>
        <name>ATP</name>
        <dbReference type="ChEBI" id="CHEBI:30616"/>
    </ligand>
</feature>
<feature type="binding site" evidence="1">
    <location>
        <position position="365"/>
    </location>
    <ligand>
        <name>ATP</name>
        <dbReference type="ChEBI" id="CHEBI:30616"/>
    </ligand>
</feature>
<feature type="binding site" evidence="1">
    <location>
        <begin position="393"/>
        <end position="400"/>
    </location>
    <ligand>
        <name>ATP</name>
        <dbReference type="ChEBI" id="CHEBI:30616"/>
    </ligand>
</feature>
<feature type="binding site" evidence="1">
    <location>
        <position position="412"/>
    </location>
    <ligand>
        <name>ATP</name>
        <dbReference type="ChEBI" id="CHEBI:30616"/>
    </ligand>
</feature>
<feature type="binding site" evidence="1">
    <location>
        <position position="535"/>
    </location>
    <ligand>
        <name>Mg(2+)</name>
        <dbReference type="ChEBI" id="CHEBI:18420"/>
    </ligand>
</feature>
<feature type="binding site" evidence="1">
    <location>
        <position position="539"/>
    </location>
    <ligand>
        <name>Mg(2+)</name>
        <dbReference type="ChEBI" id="CHEBI:18420"/>
    </ligand>
</feature>
<sequence length="697" mass="74683">MMRPVVVKEKRVNESQIHVVEEEVRQAKTMDRDIVTHAMKQSFAKLNPKVMIKNPIMFVVEIGFIITFILSFLPSHSSSVPGWFNITVSFILLFTVLFANFAEALAEGRGKAQADSLKHSKKDVFANVVKENGNIVQVSATDLRKGDVVIVKQGEMIPSDGEVIKGLASVDESAITGESAPVIKEAGGDFCSVTGGTMVVSDEITIIITSNPGESFIDKMISLVEGAARQKTPNEIALNTVLTSLTFIFLIVVVTLPIFTNYLGFQIDTAVLVALLVCLIPTTIGGLLSAIGIAGMDRVTKFNVLAMSGKAVEAAGDINTIILDKTGTITFGNRMAHTLLPVGNETIEQVGKWAAISSVLDETPEGRSVIEYVQAKSISYNRELAEQGEFVPFKAETRMSGVDLQDGTKVRKGAVGSVIEWVQSQGGTIPKDVNQKADFISKEGGTPLVVAVNNRIYGLIYLKDTVKPGMRERFEQLRQMGIKTVMCTGDNPLTAATIAKEAGVDEFVAECKPEDKIAVIKAEQDKGKLVAMTGDGTNDAPALAQADVGLAMNSGTTAAKEAANMIDLDSNPTKIIEVVGIGKQLLMTRGALTTFSIANDIAKYFAIIPAMFTLAIPQMEALNIMKLTSPLSAILSALLFNAVIIPLLIPLAMKGIAYKPMSSNALLGRNLLIYGLGGVIVPFIGIKVIDMIVGLFI</sequence>
<reference key="1">
    <citation type="submission" date="2008-10" db="EMBL/GenBank/DDBJ databases">
        <title>Genome sequence of Bacillus cereus AH187.</title>
        <authorList>
            <person name="Dodson R.J."/>
            <person name="Durkin A.S."/>
            <person name="Rosovitz M.J."/>
            <person name="Rasko D.A."/>
            <person name="Kolsto A.B."/>
            <person name="Okstad O.A."/>
            <person name="Ravel J."/>
            <person name="Sutton G."/>
        </authorList>
    </citation>
    <scope>NUCLEOTIDE SEQUENCE [LARGE SCALE GENOMIC DNA]</scope>
    <source>
        <strain>AH187</strain>
    </source>
</reference>
<dbReference type="EC" id="7.2.2.6" evidence="1"/>
<dbReference type="EMBL" id="CP001177">
    <property type="protein sequence ID" value="ACJ78940.1"/>
    <property type="molecule type" value="Genomic_DNA"/>
</dbReference>
<dbReference type="SMR" id="B7HWG1"/>
<dbReference type="KEGG" id="bcr:BCAH187_A0895"/>
<dbReference type="HOGENOM" id="CLU_025728_2_0_9"/>
<dbReference type="Proteomes" id="UP000002214">
    <property type="component" value="Chromosome"/>
</dbReference>
<dbReference type="GO" id="GO:0005886">
    <property type="term" value="C:plasma membrane"/>
    <property type="evidence" value="ECO:0007669"/>
    <property type="project" value="UniProtKB-SubCell"/>
</dbReference>
<dbReference type="GO" id="GO:0005524">
    <property type="term" value="F:ATP binding"/>
    <property type="evidence" value="ECO:0007669"/>
    <property type="project" value="UniProtKB-UniRule"/>
</dbReference>
<dbReference type="GO" id="GO:0016887">
    <property type="term" value="F:ATP hydrolysis activity"/>
    <property type="evidence" value="ECO:0007669"/>
    <property type="project" value="InterPro"/>
</dbReference>
<dbReference type="GO" id="GO:0000287">
    <property type="term" value="F:magnesium ion binding"/>
    <property type="evidence" value="ECO:0007669"/>
    <property type="project" value="UniProtKB-UniRule"/>
</dbReference>
<dbReference type="GO" id="GO:0008556">
    <property type="term" value="F:P-type potassium transmembrane transporter activity"/>
    <property type="evidence" value="ECO:0007669"/>
    <property type="project" value="UniProtKB-UniRule"/>
</dbReference>
<dbReference type="CDD" id="cd02078">
    <property type="entry name" value="P-type_ATPase_K"/>
    <property type="match status" value="1"/>
</dbReference>
<dbReference type="FunFam" id="2.70.150.10:FF:000010">
    <property type="entry name" value="Potassium-transporting ATPase ATP-binding subunit"/>
    <property type="match status" value="1"/>
</dbReference>
<dbReference type="FunFam" id="3.40.1110.10:FF:000007">
    <property type="entry name" value="Potassium-transporting ATPase ATP-binding subunit"/>
    <property type="match status" value="1"/>
</dbReference>
<dbReference type="Gene3D" id="3.40.1110.10">
    <property type="entry name" value="Calcium-transporting ATPase, cytoplasmic domain N"/>
    <property type="match status" value="1"/>
</dbReference>
<dbReference type="Gene3D" id="2.70.150.10">
    <property type="entry name" value="Calcium-transporting ATPase, cytoplasmic transduction domain A"/>
    <property type="match status" value="1"/>
</dbReference>
<dbReference type="Gene3D" id="3.40.50.1000">
    <property type="entry name" value="HAD superfamily/HAD-like"/>
    <property type="match status" value="1"/>
</dbReference>
<dbReference type="HAMAP" id="MF_00285">
    <property type="entry name" value="KdpB"/>
    <property type="match status" value="1"/>
</dbReference>
<dbReference type="InterPro" id="IPR023299">
    <property type="entry name" value="ATPase_P-typ_cyto_dom_N"/>
</dbReference>
<dbReference type="InterPro" id="IPR018303">
    <property type="entry name" value="ATPase_P-typ_P_site"/>
</dbReference>
<dbReference type="InterPro" id="IPR023298">
    <property type="entry name" value="ATPase_P-typ_TM_dom_sf"/>
</dbReference>
<dbReference type="InterPro" id="IPR008250">
    <property type="entry name" value="ATPase_P-typ_transduc_dom_A_sf"/>
</dbReference>
<dbReference type="InterPro" id="IPR036412">
    <property type="entry name" value="HAD-like_sf"/>
</dbReference>
<dbReference type="InterPro" id="IPR023214">
    <property type="entry name" value="HAD_sf"/>
</dbReference>
<dbReference type="InterPro" id="IPR006391">
    <property type="entry name" value="P-type_ATPase_bsu_IA"/>
</dbReference>
<dbReference type="InterPro" id="IPR001757">
    <property type="entry name" value="P_typ_ATPase"/>
</dbReference>
<dbReference type="InterPro" id="IPR044492">
    <property type="entry name" value="P_typ_ATPase_HD_dom"/>
</dbReference>
<dbReference type="NCBIfam" id="TIGR01494">
    <property type="entry name" value="ATPase_P-type"/>
    <property type="match status" value="2"/>
</dbReference>
<dbReference type="NCBIfam" id="TIGR01497">
    <property type="entry name" value="kdpB"/>
    <property type="match status" value="1"/>
</dbReference>
<dbReference type="PANTHER" id="PTHR43743">
    <property type="entry name" value="POTASSIUM-TRANSPORTING ATPASE ATP-BINDING SUBUNIT"/>
    <property type="match status" value="1"/>
</dbReference>
<dbReference type="PANTHER" id="PTHR43743:SF1">
    <property type="entry name" value="POTASSIUM-TRANSPORTING ATPASE ATP-BINDING SUBUNIT"/>
    <property type="match status" value="1"/>
</dbReference>
<dbReference type="Pfam" id="PF00122">
    <property type="entry name" value="E1-E2_ATPase"/>
    <property type="match status" value="1"/>
</dbReference>
<dbReference type="Pfam" id="PF00702">
    <property type="entry name" value="Hydrolase"/>
    <property type="match status" value="1"/>
</dbReference>
<dbReference type="PRINTS" id="PR00119">
    <property type="entry name" value="CATATPASE"/>
</dbReference>
<dbReference type="SFLD" id="SFLDG00002">
    <property type="entry name" value="C1.7:_P-type_atpase_like"/>
    <property type="match status" value="1"/>
</dbReference>
<dbReference type="SFLD" id="SFLDF00027">
    <property type="entry name" value="p-type_atpase"/>
    <property type="match status" value="1"/>
</dbReference>
<dbReference type="SUPFAM" id="SSF81653">
    <property type="entry name" value="Calcium ATPase, transduction domain A"/>
    <property type="match status" value="1"/>
</dbReference>
<dbReference type="SUPFAM" id="SSF81665">
    <property type="entry name" value="Calcium ATPase, transmembrane domain M"/>
    <property type="match status" value="1"/>
</dbReference>
<dbReference type="SUPFAM" id="SSF56784">
    <property type="entry name" value="HAD-like"/>
    <property type="match status" value="1"/>
</dbReference>
<dbReference type="PROSITE" id="PS00154">
    <property type="entry name" value="ATPASE_E1_E2"/>
    <property type="match status" value="1"/>
</dbReference>
<evidence type="ECO:0000255" key="1">
    <source>
        <dbReference type="HAMAP-Rule" id="MF_00285"/>
    </source>
</evidence>
<organism>
    <name type="scientific">Bacillus cereus (strain AH187)</name>
    <dbReference type="NCBI Taxonomy" id="405534"/>
    <lineage>
        <taxon>Bacteria</taxon>
        <taxon>Bacillati</taxon>
        <taxon>Bacillota</taxon>
        <taxon>Bacilli</taxon>
        <taxon>Bacillales</taxon>
        <taxon>Bacillaceae</taxon>
        <taxon>Bacillus</taxon>
        <taxon>Bacillus cereus group</taxon>
    </lineage>
</organism>